<protein>
    <recommendedName>
        <fullName evidence="1">6,7-dimethyl-8-ribityllumazine synthase</fullName>
        <shortName evidence="1">DMRL synthase</shortName>
        <shortName evidence="1">LS</shortName>
        <shortName evidence="1">Lumazine synthase</shortName>
        <ecNumber evidence="1">2.5.1.78</ecNumber>
    </recommendedName>
</protein>
<reference key="1">
    <citation type="journal article" date="2005" name="Proc. Natl. Acad. Sci. U.S.A.">
        <title>The complete genome sequence of Mycobacterium avium subspecies paratuberculosis.</title>
        <authorList>
            <person name="Li L."/>
            <person name="Bannantine J.P."/>
            <person name="Zhang Q."/>
            <person name="Amonsin A."/>
            <person name="May B.J."/>
            <person name="Alt D."/>
            <person name="Banerji N."/>
            <person name="Kanjilal S."/>
            <person name="Kapur V."/>
        </authorList>
    </citation>
    <scope>NUCLEOTIDE SEQUENCE [LARGE SCALE GENOMIC DNA]</scope>
    <source>
        <strain>ATCC BAA-968 / K-10</strain>
    </source>
</reference>
<accession>P61725</accession>
<dbReference type="EC" id="2.5.1.78" evidence="1"/>
<dbReference type="EMBL" id="AE016958">
    <property type="protein sequence ID" value="AAS03458.1"/>
    <property type="molecule type" value="Genomic_DNA"/>
</dbReference>
<dbReference type="RefSeq" id="WP_003877630.1">
    <property type="nucleotide sequence ID" value="NZ_CP106873.1"/>
</dbReference>
<dbReference type="SMR" id="P61725"/>
<dbReference type="STRING" id="262316.MAP_1141"/>
<dbReference type="KEGG" id="mpa:MAP_1141"/>
<dbReference type="PATRIC" id="fig|262316.17.peg.1200"/>
<dbReference type="eggNOG" id="COG0054">
    <property type="taxonomic scope" value="Bacteria"/>
</dbReference>
<dbReference type="HOGENOM" id="CLU_089358_1_2_11"/>
<dbReference type="UniPathway" id="UPA00275">
    <property type="reaction ID" value="UER00404"/>
</dbReference>
<dbReference type="Proteomes" id="UP000000580">
    <property type="component" value="Chromosome"/>
</dbReference>
<dbReference type="GO" id="GO:0005829">
    <property type="term" value="C:cytosol"/>
    <property type="evidence" value="ECO:0007669"/>
    <property type="project" value="TreeGrafter"/>
</dbReference>
<dbReference type="GO" id="GO:0009349">
    <property type="term" value="C:riboflavin synthase complex"/>
    <property type="evidence" value="ECO:0007669"/>
    <property type="project" value="InterPro"/>
</dbReference>
<dbReference type="GO" id="GO:0000906">
    <property type="term" value="F:6,7-dimethyl-8-ribityllumazine synthase activity"/>
    <property type="evidence" value="ECO:0007669"/>
    <property type="project" value="UniProtKB-UniRule"/>
</dbReference>
<dbReference type="GO" id="GO:0009231">
    <property type="term" value="P:riboflavin biosynthetic process"/>
    <property type="evidence" value="ECO:0007669"/>
    <property type="project" value="UniProtKB-UniRule"/>
</dbReference>
<dbReference type="CDD" id="cd09209">
    <property type="entry name" value="Lumazine_synthase-I"/>
    <property type="match status" value="1"/>
</dbReference>
<dbReference type="Gene3D" id="3.40.50.960">
    <property type="entry name" value="Lumazine/riboflavin synthase"/>
    <property type="match status" value="1"/>
</dbReference>
<dbReference type="HAMAP" id="MF_00178">
    <property type="entry name" value="Lumazine_synth"/>
    <property type="match status" value="1"/>
</dbReference>
<dbReference type="InterPro" id="IPR034964">
    <property type="entry name" value="LS"/>
</dbReference>
<dbReference type="InterPro" id="IPR002180">
    <property type="entry name" value="LS/RS"/>
</dbReference>
<dbReference type="InterPro" id="IPR036467">
    <property type="entry name" value="LS/RS_sf"/>
</dbReference>
<dbReference type="NCBIfam" id="TIGR00114">
    <property type="entry name" value="lumazine-synth"/>
    <property type="match status" value="1"/>
</dbReference>
<dbReference type="PANTHER" id="PTHR21058:SF0">
    <property type="entry name" value="6,7-DIMETHYL-8-RIBITYLLUMAZINE SYNTHASE"/>
    <property type="match status" value="1"/>
</dbReference>
<dbReference type="PANTHER" id="PTHR21058">
    <property type="entry name" value="6,7-DIMETHYL-8-RIBITYLLUMAZINE SYNTHASE DMRL SYNTHASE LUMAZINE SYNTHASE"/>
    <property type="match status" value="1"/>
</dbReference>
<dbReference type="Pfam" id="PF00885">
    <property type="entry name" value="DMRL_synthase"/>
    <property type="match status" value="1"/>
</dbReference>
<dbReference type="SUPFAM" id="SSF52121">
    <property type="entry name" value="Lumazine synthase"/>
    <property type="match status" value="1"/>
</dbReference>
<organism>
    <name type="scientific">Mycolicibacterium paratuberculosis (strain ATCC BAA-968 / K-10)</name>
    <name type="common">Mycobacterium paratuberculosis</name>
    <dbReference type="NCBI Taxonomy" id="262316"/>
    <lineage>
        <taxon>Bacteria</taxon>
        <taxon>Bacillati</taxon>
        <taxon>Actinomycetota</taxon>
        <taxon>Actinomycetes</taxon>
        <taxon>Mycobacteriales</taxon>
        <taxon>Mycobacteriaceae</taxon>
        <taxon>Mycobacterium</taxon>
        <taxon>Mycobacterium avium complex (MAC)</taxon>
    </lineage>
</organism>
<evidence type="ECO:0000255" key="1">
    <source>
        <dbReference type="HAMAP-Rule" id="MF_00178"/>
    </source>
</evidence>
<gene>
    <name evidence="1" type="primary">ribH</name>
    <name type="ordered locus">MAP_1141</name>
</gene>
<comment type="function">
    <text evidence="1">Catalyzes the formation of 6,7-dimethyl-8-ribityllumazine by condensation of 5-amino-6-(D-ribitylamino)uracil with 3,4-dihydroxy-2-butanone 4-phosphate. This is the penultimate step in the biosynthesis of riboflavin.</text>
</comment>
<comment type="catalytic activity">
    <reaction evidence="1">
        <text>(2S)-2-hydroxy-3-oxobutyl phosphate + 5-amino-6-(D-ribitylamino)uracil = 6,7-dimethyl-8-(1-D-ribityl)lumazine + phosphate + 2 H2O + H(+)</text>
        <dbReference type="Rhea" id="RHEA:26152"/>
        <dbReference type="ChEBI" id="CHEBI:15377"/>
        <dbReference type="ChEBI" id="CHEBI:15378"/>
        <dbReference type="ChEBI" id="CHEBI:15934"/>
        <dbReference type="ChEBI" id="CHEBI:43474"/>
        <dbReference type="ChEBI" id="CHEBI:58201"/>
        <dbReference type="ChEBI" id="CHEBI:58830"/>
        <dbReference type="EC" id="2.5.1.78"/>
    </reaction>
</comment>
<comment type="pathway">
    <text evidence="1">Cofactor biosynthesis; riboflavin biosynthesis; riboflavin from 2-hydroxy-3-oxobutyl phosphate and 5-amino-6-(D-ribitylamino)uracil: step 1/2.</text>
</comment>
<comment type="subunit">
    <text evidence="1">Homopentamer.</text>
</comment>
<comment type="similarity">
    <text evidence="1">Belongs to the DMRL synthase family.</text>
</comment>
<keyword id="KW-1185">Reference proteome</keyword>
<keyword id="KW-0686">Riboflavin biosynthesis</keyword>
<keyword id="KW-0808">Transferase</keyword>
<name>RISB_MYCPA</name>
<sequence>MSPAAGVPEMPALDASGVRLGIVASTWHSRICDALLAGARKVAADSGVDNPTVVRVLGAIEIPVVAQELARNHDAVVALGVVIRGQTPHFEYVCDAVTQGITRVSLDASTPVANGVLTTDNEQQALDRAGLPESAEDKGSQAAGAALSAALTLRELRARS</sequence>
<proteinExistence type="inferred from homology"/>
<feature type="chain" id="PRO_0000134771" description="6,7-dimethyl-8-ribityllumazine synthase">
    <location>
        <begin position="1"/>
        <end position="160"/>
    </location>
</feature>
<feature type="active site" description="Proton donor" evidence="1">
    <location>
        <position position="89"/>
    </location>
</feature>
<feature type="binding site" evidence="1">
    <location>
        <position position="27"/>
    </location>
    <ligand>
        <name>5-amino-6-(D-ribitylamino)uracil</name>
        <dbReference type="ChEBI" id="CHEBI:15934"/>
    </ligand>
</feature>
<feature type="binding site" evidence="1">
    <location>
        <begin position="59"/>
        <end position="61"/>
    </location>
    <ligand>
        <name>5-amino-6-(D-ribitylamino)uracil</name>
        <dbReference type="ChEBI" id="CHEBI:15934"/>
    </ligand>
</feature>
<feature type="binding site" evidence="1">
    <location>
        <begin position="81"/>
        <end position="83"/>
    </location>
    <ligand>
        <name>5-amino-6-(D-ribitylamino)uracil</name>
        <dbReference type="ChEBI" id="CHEBI:15934"/>
    </ligand>
</feature>
<feature type="binding site" evidence="1">
    <location>
        <begin position="86"/>
        <end position="87"/>
    </location>
    <ligand>
        <name>(2S)-2-hydroxy-3-oxobutyl phosphate</name>
        <dbReference type="ChEBI" id="CHEBI:58830"/>
    </ligand>
</feature>
<feature type="binding site" evidence="1">
    <location>
        <position position="114"/>
    </location>
    <ligand>
        <name>5-amino-6-(D-ribitylamino)uracil</name>
        <dbReference type="ChEBI" id="CHEBI:15934"/>
    </ligand>
</feature>
<feature type="binding site" evidence="1">
    <location>
        <position position="128"/>
    </location>
    <ligand>
        <name>(2S)-2-hydroxy-3-oxobutyl phosphate</name>
        <dbReference type="ChEBI" id="CHEBI:58830"/>
    </ligand>
</feature>